<proteinExistence type="inferred from homology"/>
<feature type="chain" id="PRO_0000174750" description="Co-chaperonin GroES">
    <location>
        <begin position="1"/>
        <end position="94"/>
    </location>
</feature>
<reference key="1">
    <citation type="journal article" date="1995" name="Microbiology">
        <title>The Cowdria ruminantium groE operon.</title>
        <authorList>
            <person name="Lally N.C."/>
            <person name="Nicoll S."/>
            <person name="Paxton E.A."/>
            <person name="Cary C.M."/>
            <person name="Sumption K.J."/>
        </authorList>
    </citation>
    <scope>NUCLEOTIDE SEQUENCE [GENOMIC DNA]</scope>
</reference>
<reference key="2">
    <citation type="journal article" date="2005" name="Proc. Natl. Acad. Sci. U.S.A.">
        <title>The genome of the heartwater agent Ehrlichia ruminantium contains multiple tandem repeats of actively variable copy number.</title>
        <authorList>
            <person name="Collins N.E."/>
            <person name="Liebenberg J."/>
            <person name="de Villiers E.P."/>
            <person name="Brayton K.A."/>
            <person name="Louw E."/>
            <person name="Pretorius A."/>
            <person name="Faber F.E."/>
            <person name="van Heerden H."/>
            <person name="Josemans A."/>
            <person name="van Kleef M."/>
            <person name="Steyn H.C."/>
            <person name="van Strijp M.F."/>
            <person name="Zweygarth E."/>
            <person name="Jongejan F."/>
            <person name="Maillard J.C."/>
            <person name="Berthier D."/>
            <person name="Botha M."/>
            <person name="Joubert F."/>
            <person name="Corton C.H."/>
            <person name="Thomson N.R."/>
            <person name="Allsopp M.T."/>
            <person name="Allsopp B.A."/>
        </authorList>
    </citation>
    <scope>NUCLEOTIDE SEQUENCE [LARGE SCALE GENOMIC DNA]</scope>
    <source>
        <strain>Welgevonden</strain>
    </source>
</reference>
<reference key="3">
    <citation type="journal article" date="2006" name="J. Bacteriol.">
        <title>Comparative genomic analysis of three strains of Ehrlichia ruminantium reveals an active process of genome size plasticity.</title>
        <authorList>
            <person name="Frutos R."/>
            <person name="Viari A."/>
            <person name="Ferraz C."/>
            <person name="Morgat A."/>
            <person name="Eychenie S."/>
            <person name="Kandassamy Y."/>
            <person name="Chantal I."/>
            <person name="Bensaid A."/>
            <person name="Coissac E."/>
            <person name="Vachiery N."/>
            <person name="Demaille J."/>
            <person name="Martinez D."/>
        </authorList>
    </citation>
    <scope>NUCLEOTIDE SEQUENCE [LARGE SCALE GENOMIC DNA]</scope>
    <source>
        <strain>Welgevonden</strain>
    </source>
</reference>
<dbReference type="EMBL" id="U13638">
    <property type="protein sequence ID" value="AAA93152.1"/>
    <property type="molecule type" value="Genomic_DNA"/>
</dbReference>
<dbReference type="EMBL" id="CR767821">
    <property type="protein sequence ID" value="CAH58375.1"/>
    <property type="molecule type" value="Genomic_DNA"/>
</dbReference>
<dbReference type="EMBL" id="CR925678">
    <property type="protein sequence ID" value="CAI27168.1"/>
    <property type="molecule type" value="Genomic_DNA"/>
</dbReference>
<dbReference type="RefSeq" id="WP_011155323.1">
    <property type="nucleotide sequence ID" value="NC_005295.2"/>
</dbReference>
<dbReference type="SMR" id="P48224"/>
<dbReference type="GeneID" id="33058294"/>
<dbReference type="KEGG" id="eru:Erum6430"/>
<dbReference type="KEGG" id="erw:ERWE_CDS_06740"/>
<dbReference type="eggNOG" id="COG0234">
    <property type="taxonomic scope" value="Bacteria"/>
</dbReference>
<dbReference type="HOGENOM" id="CLU_132825_1_0_5"/>
<dbReference type="Proteomes" id="UP000001021">
    <property type="component" value="Chromosome"/>
</dbReference>
<dbReference type="GO" id="GO:0005737">
    <property type="term" value="C:cytoplasm"/>
    <property type="evidence" value="ECO:0007669"/>
    <property type="project" value="UniProtKB-SubCell"/>
</dbReference>
<dbReference type="GO" id="GO:0005524">
    <property type="term" value="F:ATP binding"/>
    <property type="evidence" value="ECO:0007669"/>
    <property type="project" value="InterPro"/>
</dbReference>
<dbReference type="GO" id="GO:0046872">
    <property type="term" value="F:metal ion binding"/>
    <property type="evidence" value="ECO:0007669"/>
    <property type="project" value="TreeGrafter"/>
</dbReference>
<dbReference type="GO" id="GO:0044183">
    <property type="term" value="F:protein folding chaperone"/>
    <property type="evidence" value="ECO:0007669"/>
    <property type="project" value="InterPro"/>
</dbReference>
<dbReference type="GO" id="GO:0051087">
    <property type="term" value="F:protein-folding chaperone binding"/>
    <property type="evidence" value="ECO:0007669"/>
    <property type="project" value="TreeGrafter"/>
</dbReference>
<dbReference type="GO" id="GO:0051082">
    <property type="term" value="F:unfolded protein binding"/>
    <property type="evidence" value="ECO:0007669"/>
    <property type="project" value="TreeGrafter"/>
</dbReference>
<dbReference type="GO" id="GO:0051085">
    <property type="term" value="P:chaperone cofactor-dependent protein refolding"/>
    <property type="evidence" value="ECO:0007669"/>
    <property type="project" value="TreeGrafter"/>
</dbReference>
<dbReference type="CDD" id="cd00320">
    <property type="entry name" value="cpn10"/>
    <property type="match status" value="1"/>
</dbReference>
<dbReference type="FunFam" id="2.30.33.40:FF:000001">
    <property type="entry name" value="10 kDa chaperonin"/>
    <property type="match status" value="1"/>
</dbReference>
<dbReference type="Gene3D" id="2.30.33.40">
    <property type="entry name" value="GroES chaperonin"/>
    <property type="match status" value="1"/>
</dbReference>
<dbReference type="HAMAP" id="MF_00580">
    <property type="entry name" value="CH10"/>
    <property type="match status" value="1"/>
</dbReference>
<dbReference type="InterPro" id="IPR020818">
    <property type="entry name" value="Chaperonin_GroES"/>
</dbReference>
<dbReference type="InterPro" id="IPR037124">
    <property type="entry name" value="Chaperonin_GroES_sf"/>
</dbReference>
<dbReference type="InterPro" id="IPR011032">
    <property type="entry name" value="GroES-like_sf"/>
</dbReference>
<dbReference type="NCBIfam" id="NF001533">
    <property type="entry name" value="PRK00364.2-4"/>
    <property type="match status" value="1"/>
</dbReference>
<dbReference type="PANTHER" id="PTHR10772">
    <property type="entry name" value="10 KDA HEAT SHOCK PROTEIN"/>
    <property type="match status" value="1"/>
</dbReference>
<dbReference type="PANTHER" id="PTHR10772:SF63">
    <property type="entry name" value="20 KDA CHAPERONIN, CHLOROPLASTIC"/>
    <property type="match status" value="1"/>
</dbReference>
<dbReference type="Pfam" id="PF00166">
    <property type="entry name" value="Cpn10"/>
    <property type="match status" value="1"/>
</dbReference>
<dbReference type="PRINTS" id="PR00297">
    <property type="entry name" value="CHAPERONIN10"/>
</dbReference>
<dbReference type="SMART" id="SM00883">
    <property type="entry name" value="Cpn10"/>
    <property type="match status" value="1"/>
</dbReference>
<dbReference type="SUPFAM" id="SSF50129">
    <property type="entry name" value="GroES-like"/>
    <property type="match status" value="1"/>
</dbReference>
<sequence>MNLNMLHDNVLIEALEESLNNSPIQLPESAKKKPTKGKVVAVGPGSYNNNGNLIPMTLKVGDVVFYRQWAGNEVEFSDKKYIVMKESDIIAKEV</sequence>
<gene>
    <name evidence="1" type="primary">groES</name>
    <name evidence="1" type="synonym">groS</name>
    <name type="ordered locus">Erum6430</name>
    <name type="ordered locus">ERWE_CDS_06740</name>
</gene>
<accession>P48224</accession>
<accession>Q5FDA7</accession>
<evidence type="ECO:0000255" key="1">
    <source>
        <dbReference type="HAMAP-Rule" id="MF_00580"/>
    </source>
</evidence>
<evidence type="ECO:0000305" key="2"/>
<protein>
    <recommendedName>
        <fullName evidence="1">Co-chaperonin GroES</fullName>
    </recommendedName>
    <alternativeName>
        <fullName evidence="1">10 kDa chaperonin</fullName>
    </alternativeName>
    <alternativeName>
        <fullName evidence="1">Chaperonin-10</fullName>
        <shortName evidence="1">Cpn10</shortName>
    </alternativeName>
</protein>
<keyword id="KW-0143">Chaperone</keyword>
<keyword id="KW-0963">Cytoplasm</keyword>
<name>CH10_EHRRW</name>
<comment type="function">
    <text evidence="1">Together with the chaperonin GroEL, plays an essential role in assisting protein folding. The GroEL-GroES system forms a nano-cage that allows encapsulation of the non-native substrate proteins and provides a physical environment optimized to promote and accelerate protein folding. GroES binds to the apical surface of the GroEL ring, thereby capping the opening of the GroEL channel.</text>
</comment>
<comment type="subunit">
    <text evidence="1">Heptamer of 7 subunits arranged in a ring. Interacts with the chaperonin GroEL.</text>
</comment>
<comment type="subcellular location">
    <subcellularLocation>
        <location evidence="1">Cytoplasm</location>
    </subcellularLocation>
</comment>
<comment type="similarity">
    <text evidence="1 2">Belongs to the GroES chaperonin family.</text>
</comment>
<organism>
    <name type="scientific">Ehrlichia ruminantium (strain Welgevonden)</name>
    <dbReference type="NCBI Taxonomy" id="254945"/>
    <lineage>
        <taxon>Bacteria</taxon>
        <taxon>Pseudomonadati</taxon>
        <taxon>Pseudomonadota</taxon>
        <taxon>Alphaproteobacteria</taxon>
        <taxon>Rickettsiales</taxon>
        <taxon>Anaplasmataceae</taxon>
        <taxon>Ehrlichia</taxon>
    </lineage>
</organism>